<reference key="1">
    <citation type="journal article" date="2004" name="Am. J. Hum. Genet.">
        <title>Mutation of CERKL, a novel human ceramide kinase gene, causes autosomal recessive retinitis pigmentosa (RP26).</title>
        <authorList>
            <person name="Tuson M."/>
            <person name="Marfany G."/>
            <person name="Gonzalez-Duarte R."/>
        </authorList>
    </citation>
    <scope>NUCLEOTIDE SEQUENCE [MRNA] (ISOFORMS 1; 2; 3; 4; 7 AND 8)</scope>
    <scope>INVOLVEMENT IN RP26</scope>
    <scope>TISSUE SPECIFICITY</scope>
    <scope>DEVELOPMENTAL STAGE</scope>
    <source>
        <tissue>Retina</tissue>
    </source>
</reference>
<reference key="2">
    <citation type="journal article" date="2005" name="Biochim. Biophys. Acta">
        <title>Characterization of a ceramide kinase-like protein.</title>
        <authorList>
            <person name="Bornancin F."/>
            <person name="Mechtcheriakova D."/>
            <person name="Stora S."/>
            <person name="Graf C."/>
            <person name="Wlachos A."/>
            <person name="Devay P."/>
            <person name="Urtz N."/>
            <person name="Baumruker T."/>
            <person name="Billich A."/>
        </authorList>
    </citation>
    <scope>NUCLEOTIDE SEQUENCE [MRNA] (ISOFORMS 2; 5; 7 AND 8)</scope>
    <scope>FUNCTION</scope>
    <scope>TISSUE SPECIFICITY</scope>
    <scope>PHOSPHORYLATION</scope>
    <scope>SUBCELLULAR LOCATION</scope>
    <scope>MUTAGENESIS OF GLY-260</scope>
    <source>
        <tissue>Brain</tissue>
    </source>
</reference>
<reference key="3">
    <citation type="journal article" date="2004" name="Nat. Genet.">
        <title>Complete sequencing and characterization of 21,243 full-length human cDNAs.</title>
        <authorList>
            <person name="Ota T."/>
            <person name="Suzuki Y."/>
            <person name="Nishikawa T."/>
            <person name="Otsuki T."/>
            <person name="Sugiyama T."/>
            <person name="Irie R."/>
            <person name="Wakamatsu A."/>
            <person name="Hayashi K."/>
            <person name="Sato H."/>
            <person name="Nagai K."/>
            <person name="Kimura K."/>
            <person name="Makita H."/>
            <person name="Sekine M."/>
            <person name="Obayashi M."/>
            <person name="Nishi T."/>
            <person name="Shibahara T."/>
            <person name="Tanaka T."/>
            <person name="Ishii S."/>
            <person name="Yamamoto J."/>
            <person name="Saito K."/>
            <person name="Kawai Y."/>
            <person name="Isono Y."/>
            <person name="Nakamura Y."/>
            <person name="Nagahari K."/>
            <person name="Murakami K."/>
            <person name="Yasuda T."/>
            <person name="Iwayanagi T."/>
            <person name="Wagatsuma M."/>
            <person name="Shiratori A."/>
            <person name="Sudo H."/>
            <person name="Hosoiri T."/>
            <person name="Kaku Y."/>
            <person name="Kodaira H."/>
            <person name="Kondo H."/>
            <person name="Sugawara M."/>
            <person name="Takahashi M."/>
            <person name="Kanda K."/>
            <person name="Yokoi T."/>
            <person name="Furuya T."/>
            <person name="Kikkawa E."/>
            <person name="Omura Y."/>
            <person name="Abe K."/>
            <person name="Kamihara K."/>
            <person name="Katsuta N."/>
            <person name="Sato K."/>
            <person name="Tanikawa M."/>
            <person name="Yamazaki M."/>
            <person name="Ninomiya K."/>
            <person name="Ishibashi T."/>
            <person name="Yamashita H."/>
            <person name="Murakawa K."/>
            <person name="Fujimori K."/>
            <person name="Tanai H."/>
            <person name="Kimata M."/>
            <person name="Watanabe M."/>
            <person name="Hiraoka S."/>
            <person name="Chiba Y."/>
            <person name="Ishida S."/>
            <person name="Ono Y."/>
            <person name="Takiguchi S."/>
            <person name="Watanabe S."/>
            <person name="Yosida M."/>
            <person name="Hotuta T."/>
            <person name="Kusano J."/>
            <person name="Kanehori K."/>
            <person name="Takahashi-Fujii A."/>
            <person name="Hara H."/>
            <person name="Tanase T.-O."/>
            <person name="Nomura Y."/>
            <person name="Togiya S."/>
            <person name="Komai F."/>
            <person name="Hara R."/>
            <person name="Takeuchi K."/>
            <person name="Arita M."/>
            <person name="Imose N."/>
            <person name="Musashino K."/>
            <person name="Yuuki H."/>
            <person name="Oshima A."/>
            <person name="Sasaki N."/>
            <person name="Aotsuka S."/>
            <person name="Yoshikawa Y."/>
            <person name="Matsunawa H."/>
            <person name="Ichihara T."/>
            <person name="Shiohata N."/>
            <person name="Sano S."/>
            <person name="Moriya S."/>
            <person name="Momiyama H."/>
            <person name="Satoh N."/>
            <person name="Takami S."/>
            <person name="Terashima Y."/>
            <person name="Suzuki O."/>
            <person name="Nakagawa S."/>
            <person name="Senoh A."/>
            <person name="Mizoguchi H."/>
            <person name="Goto Y."/>
            <person name="Shimizu F."/>
            <person name="Wakebe H."/>
            <person name="Hishigaki H."/>
            <person name="Watanabe T."/>
            <person name="Sugiyama A."/>
            <person name="Takemoto M."/>
            <person name="Kawakami B."/>
            <person name="Yamazaki M."/>
            <person name="Watanabe K."/>
            <person name="Kumagai A."/>
            <person name="Itakura S."/>
            <person name="Fukuzumi Y."/>
            <person name="Fujimori Y."/>
            <person name="Komiyama M."/>
            <person name="Tashiro H."/>
            <person name="Tanigami A."/>
            <person name="Fujiwara T."/>
            <person name="Ono T."/>
            <person name="Yamada K."/>
            <person name="Fujii Y."/>
            <person name="Ozaki K."/>
            <person name="Hirao M."/>
            <person name="Ohmori Y."/>
            <person name="Kawabata A."/>
            <person name="Hikiji T."/>
            <person name="Kobatake N."/>
            <person name="Inagaki H."/>
            <person name="Ikema Y."/>
            <person name="Okamoto S."/>
            <person name="Okitani R."/>
            <person name="Kawakami T."/>
            <person name="Noguchi S."/>
            <person name="Itoh T."/>
            <person name="Shigeta K."/>
            <person name="Senba T."/>
            <person name="Matsumura K."/>
            <person name="Nakajima Y."/>
            <person name="Mizuno T."/>
            <person name="Morinaga M."/>
            <person name="Sasaki M."/>
            <person name="Togashi T."/>
            <person name="Oyama M."/>
            <person name="Hata H."/>
            <person name="Watanabe M."/>
            <person name="Komatsu T."/>
            <person name="Mizushima-Sugano J."/>
            <person name="Satoh T."/>
            <person name="Shirai Y."/>
            <person name="Takahashi Y."/>
            <person name="Nakagawa K."/>
            <person name="Okumura K."/>
            <person name="Nagase T."/>
            <person name="Nomura N."/>
            <person name="Kikuchi H."/>
            <person name="Masuho Y."/>
            <person name="Yamashita R."/>
            <person name="Nakai K."/>
            <person name="Yada T."/>
            <person name="Nakamura Y."/>
            <person name="Ohara O."/>
            <person name="Isogai T."/>
            <person name="Sugano S."/>
        </authorList>
    </citation>
    <scope>NUCLEOTIDE SEQUENCE [LARGE SCALE MRNA] (ISOFORM 9)</scope>
    <scope>NUCLEOTIDE SEQUENCE [LARGE SCALE MRNA] OF 199-558 (ISOFORM 7)</scope>
    <source>
        <tissue>Kidney</tissue>
    </source>
</reference>
<reference key="4">
    <citation type="journal article" date="2005" name="Nature">
        <title>Generation and annotation of the DNA sequences of human chromosomes 2 and 4.</title>
        <authorList>
            <person name="Hillier L.W."/>
            <person name="Graves T.A."/>
            <person name="Fulton R.S."/>
            <person name="Fulton L.A."/>
            <person name="Pepin K.H."/>
            <person name="Minx P."/>
            <person name="Wagner-McPherson C."/>
            <person name="Layman D."/>
            <person name="Wylie K."/>
            <person name="Sekhon M."/>
            <person name="Becker M.C."/>
            <person name="Fewell G.A."/>
            <person name="Delehaunty K.D."/>
            <person name="Miner T.L."/>
            <person name="Nash W.E."/>
            <person name="Kremitzki C."/>
            <person name="Oddy L."/>
            <person name="Du H."/>
            <person name="Sun H."/>
            <person name="Bradshaw-Cordum H."/>
            <person name="Ali J."/>
            <person name="Carter J."/>
            <person name="Cordes M."/>
            <person name="Harris A."/>
            <person name="Isak A."/>
            <person name="van Brunt A."/>
            <person name="Nguyen C."/>
            <person name="Du F."/>
            <person name="Courtney L."/>
            <person name="Kalicki J."/>
            <person name="Ozersky P."/>
            <person name="Abbott S."/>
            <person name="Armstrong J."/>
            <person name="Belter E.A."/>
            <person name="Caruso L."/>
            <person name="Cedroni M."/>
            <person name="Cotton M."/>
            <person name="Davidson T."/>
            <person name="Desai A."/>
            <person name="Elliott G."/>
            <person name="Erb T."/>
            <person name="Fronick C."/>
            <person name="Gaige T."/>
            <person name="Haakenson W."/>
            <person name="Haglund K."/>
            <person name="Holmes A."/>
            <person name="Harkins R."/>
            <person name="Kim K."/>
            <person name="Kruchowski S.S."/>
            <person name="Strong C.M."/>
            <person name="Grewal N."/>
            <person name="Goyea E."/>
            <person name="Hou S."/>
            <person name="Levy A."/>
            <person name="Martinka S."/>
            <person name="Mead K."/>
            <person name="McLellan M.D."/>
            <person name="Meyer R."/>
            <person name="Randall-Maher J."/>
            <person name="Tomlinson C."/>
            <person name="Dauphin-Kohlberg S."/>
            <person name="Kozlowicz-Reilly A."/>
            <person name="Shah N."/>
            <person name="Swearengen-Shahid S."/>
            <person name="Snider J."/>
            <person name="Strong J.T."/>
            <person name="Thompson J."/>
            <person name="Yoakum M."/>
            <person name="Leonard S."/>
            <person name="Pearman C."/>
            <person name="Trani L."/>
            <person name="Radionenko M."/>
            <person name="Waligorski J.E."/>
            <person name="Wang C."/>
            <person name="Rock S.M."/>
            <person name="Tin-Wollam A.-M."/>
            <person name="Maupin R."/>
            <person name="Latreille P."/>
            <person name="Wendl M.C."/>
            <person name="Yang S.-P."/>
            <person name="Pohl C."/>
            <person name="Wallis J.W."/>
            <person name="Spieth J."/>
            <person name="Bieri T.A."/>
            <person name="Berkowicz N."/>
            <person name="Nelson J.O."/>
            <person name="Osborne J."/>
            <person name="Ding L."/>
            <person name="Meyer R."/>
            <person name="Sabo A."/>
            <person name="Shotland Y."/>
            <person name="Sinha P."/>
            <person name="Wohldmann P.E."/>
            <person name="Cook L.L."/>
            <person name="Hickenbotham M.T."/>
            <person name="Eldred J."/>
            <person name="Williams D."/>
            <person name="Jones T.A."/>
            <person name="She X."/>
            <person name="Ciccarelli F.D."/>
            <person name="Izaurralde E."/>
            <person name="Taylor J."/>
            <person name="Schmutz J."/>
            <person name="Myers R.M."/>
            <person name="Cox D.R."/>
            <person name="Huang X."/>
            <person name="McPherson J.D."/>
            <person name="Mardis E.R."/>
            <person name="Clifton S.W."/>
            <person name="Warren W.C."/>
            <person name="Chinwalla A.T."/>
            <person name="Eddy S.R."/>
            <person name="Marra M.A."/>
            <person name="Ovcharenko I."/>
            <person name="Furey T.S."/>
            <person name="Miller W."/>
            <person name="Eichler E.E."/>
            <person name="Bork P."/>
            <person name="Suyama M."/>
            <person name="Torrents D."/>
            <person name="Waterston R.H."/>
            <person name="Wilson R.K."/>
        </authorList>
    </citation>
    <scope>NUCLEOTIDE SEQUENCE [LARGE SCALE GENOMIC DNA]</scope>
</reference>
<reference key="5">
    <citation type="journal article" date="2004" name="Genome Res.">
        <title>The status, quality, and expansion of the NIH full-length cDNA project: the Mammalian Gene Collection (MGC).</title>
        <authorList>
            <consortium name="The MGC Project Team"/>
        </authorList>
    </citation>
    <scope>NUCLEOTIDE SEQUENCE [LARGE SCALE MRNA] (ISOFORM 2)</scope>
    <source>
        <tissue>Brain</tissue>
    </source>
</reference>
<reference key="6">
    <citation type="journal article" date="2009" name="Biochim. Biophys. Acta">
        <title>Subcellular localization of ceramide kinase and ceramide kinase-like protein requires interplay of their Pleckstrin Homology domain-containing N-terminal regions together with C-terminal domains.</title>
        <authorList>
            <person name="Rovina P."/>
            <person name="Schanzer A."/>
            <person name="Graf C."/>
            <person name="Mechtcheriakova D."/>
            <person name="Jaritz M."/>
            <person name="Bornancin F."/>
        </authorList>
    </citation>
    <scope>SUBCELLULAR LOCATION</scope>
    <scope>MUTAGENESIS OF 104-LYS--ARG-106</scope>
</reference>
<reference key="7">
    <citation type="journal article" date="2009" name="Mol. Vis.">
        <title>Overexpression of CERKL, a gene responsible for retinitis pigmentosa in humans, protects cells from apoptosis induced by oxidative stress.</title>
        <authorList>
            <person name="Tuson M."/>
            <person name="Garanto A."/>
            <person name="Gonzalez-Duarte R."/>
            <person name="Marfany G."/>
        </authorList>
    </citation>
    <scope>FUNCTION</scope>
    <scope>SUBCELLULAR LOCATION</scope>
    <scope>TISSUE SPECIFICITY</scope>
</reference>
<reference key="8">
    <citation type="journal article" date="2008" name="Mol. Vis.">
        <title>A missense mutation in the nuclear localization signal sequence of CERKL (p.R106S) causes autosomal recessive retinal degeneration.</title>
        <authorList>
            <person name="Ali M."/>
            <person name="Ramprasad V.L."/>
            <person name="Soumittra N."/>
            <person name="Mohamed M.D."/>
            <person name="Jafri H."/>
            <person name="Rashid Y."/>
            <person name="Danciger M."/>
            <person name="McKibbin M."/>
            <person name="Kumaramanickavel G."/>
            <person name="Inglehearn C.F."/>
        </authorList>
    </citation>
    <scope>VARIANT RP26 SER-106</scope>
</reference>
<gene>
    <name type="primary">CERKL</name>
</gene>
<accession>Q49MI3</accession>
<accession>B2RPL2</accession>
<accession>B4DEY1</accession>
<accession>Q49MH9</accession>
<accession>Q49MI0</accession>
<accession>Q49MI1</accession>
<accession>Q49MI2</accession>
<accession>Q5DVJ2</accession>
<accession>Q5DVJ4</accession>
<accession>Q5DVJ5</accession>
<accession>Q6UZF6</accession>
<accession>Q6ZP59</accession>
<keyword id="KW-0025">Alternative splicing</keyword>
<keyword id="KW-0963">Cytoplasm</keyword>
<keyword id="KW-0225">Disease variant</keyword>
<keyword id="KW-0256">Endoplasmic reticulum</keyword>
<keyword id="KW-0333">Golgi apparatus</keyword>
<keyword id="KW-0539">Nucleus</keyword>
<keyword id="KW-0597">Phosphoprotein</keyword>
<keyword id="KW-1267">Proteomics identification</keyword>
<keyword id="KW-1185">Reference proteome</keyword>
<keyword id="KW-0682">Retinitis pigmentosa</keyword>
<feature type="chain" id="PRO_0000181356" description="Ceramide kinase-like protein">
    <location>
        <begin position="1"/>
        <end position="558"/>
    </location>
</feature>
<feature type="domain" description="DAGKc" evidence="2">
    <location>
        <begin position="164"/>
        <end position="339"/>
    </location>
</feature>
<feature type="region of interest" description="Disordered" evidence="3">
    <location>
        <begin position="1"/>
        <end position="36"/>
    </location>
</feature>
<feature type="short sequence motif" description="Nuclear localization signal 1" evidence="1">
    <location>
        <begin position="2"/>
        <end position="9"/>
    </location>
</feature>
<feature type="short sequence motif" description="Nuclear localization signal 2">
    <location>
        <begin position="102"/>
        <end position="106"/>
    </location>
</feature>
<feature type="splice variant" id="VSP_016653" description="In isoform 4." evidence="9">
    <location>
        <begin position="160"/>
        <end position="298"/>
    </location>
</feature>
<feature type="splice variant" id="VSP_042663" description="In isoform 9." evidence="10">
    <original>GFPNRPKSLKILLNPQSHKKEATQVYYEKVEPLLKLAGIKTDVTI</original>
    <variation>V</variation>
    <location>
        <begin position="161"/>
        <end position="205"/>
    </location>
</feature>
<feature type="splice variant" id="VSP_016654" description="In isoform 8." evidence="9 12">
    <original>GFPNRPKSLKILL</original>
    <variation>VLSVLVEMDLLAK</variation>
    <location>
        <begin position="161"/>
        <end position="173"/>
    </location>
</feature>
<feature type="splice variant" id="VSP_016655" description="In isoform 8." evidence="9 12">
    <location>
        <begin position="174"/>
        <end position="558"/>
    </location>
</feature>
<feature type="splice variant" id="VSP_016656" description="In isoform 3." evidence="9">
    <original>IMEYEGHALSLLKECELQGFDGGHRKPLFAIHWSVQRLFTGMQTLEPSVVCVGGDGSASEVAHALLLRAQKNAGMETDRILTPVRAQLPLGLIPAG</original>
    <variation>R</variation>
    <location>
        <begin position="205"/>
        <end position="300"/>
    </location>
</feature>
<feature type="splice variant" id="VSP_016657" description="In isoform 7." evidence="9 10 12">
    <original>IMEYEGHALSLLK</original>
    <variation>MLSVLVEMDLLAK</variation>
    <location>
        <begin position="205"/>
        <end position="217"/>
    </location>
</feature>
<feature type="splice variant" id="VSP_016658" description="In isoform 7." evidence="9 10 12">
    <location>
        <begin position="218"/>
        <end position="558"/>
    </location>
</feature>
<feature type="splice variant" id="VSP_016659" description="In isoform 2 and isoform 5." evidence="9 11 12">
    <location>
        <begin position="227"/>
        <end position="252"/>
    </location>
</feature>
<feature type="splice variant" id="VSP_016660" description="In isoform 5." evidence="12">
    <location>
        <begin position="405"/>
        <end position="558"/>
    </location>
</feature>
<feature type="sequence variant" id="VAR_065182" description="In RP26; dbSNP:rs569826109." evidence="6">
    <original>R</original>
    <variation>S</variation>
    <location>
        <position position="106"/>
    </location>
</feature>
<feature type="sequence variant" id="VAR_053688" description="In dbSNP:rs10185262.">
    <original>L</original>
    <variation>F</variation>
    <location>
        <position position="232"/>
    </location>
</feature>
<feature type="sequence variant" id="VAR_053689" description="In dbSNP:rs35955809.">
    <original>E</original>
    <variation>G</variation>
    <location>
        <position position="514"/>
    </location>
</feature>
<feature type="mutagenesis site" description="Only cytoplasmic." evidence="8">
    <original>KRR</original>
    <variation>GGG</variation>
    <location>
        <begin position="104"/>
        <end position="106"/>
    </location>
</feature>
<feature type="mutagenesis site" description="Loss of nuclear localization; in isoform 2." evidence="5">
    <original>G</original>
    <variation>D</variation>
    <location>
        <position position="260"/>
    </location>
</feature>
<feature type="sequence conflict" description="In Ref. 2; CAG26980." evidence="13" ref="2">
    <original>E</original>
    <variation>D</variation>
    <location>
        <position position="129"/>
    </location>
</feature>
<feature type="sequence conflict" description="In Ref. 2; CAG26978." evidence="13" ref="2">
    <original>H</original>
    <variation>R</variation>
    <location>
        <position position="178"/>
    </location>
</feature>
<feature type="sequence conflict" description="In Ref. 2; CAG26977." evidence="13" ref="2">
    <original>G</original>
    <variation>E</variation>
    <location>
        <position position="210"/>
    </location>
</feature>
<proteinExistence type="evidence at protein level"/>
<comment type="function">
    <text evidence="5 7">Has no detectable ceramide-kinase activity. Overexpression of CERKL protects cells from apoptosis in oxidative stress conditions.</text>
</comment>
<comment type="interaction">
    <interactant intactId="EBI-25586026">
        <id>Q49MI3</id>
    </interactant>
    <interactant intactId="EBI-989143">
        <id>P35813</id>
        <label>PPM1A</label>
    </interactant>
    <organismsDiffer>false</organismsDiffer>
    <experiments>3</experiments>
</comment>
<comment type="subcellular location">
    <subcellularLocation>
        <location>Cytoplasm</location>
    </subcellularLocation>
    <subcellularLocation>
        <location>Nucleus</location>
        <location>Nucleolus</location>
    </subcellularLocation>
    <text>Enriched in nucleoli. May shuttle between nucleus and cytoplasm. Isoform 5 is not enriched in the nucleoli.</text>
</comment>
<comment type="subcellular location">
    <molecule>Isoform 2</molecule>
    <subcellularLocation>
        <location>Cytoplasm</location>
    </subcellularLocation>
    <subcellularLocation>
        <location>Nucleus</location>
        <location>Nucleolus</location>
    </subcellularLocation>
    <subcellularLocation>
        <location>Golgi apparatus</location>
        <location>trans-Golgi network</location>
    </subcellularLocation>
    <subcellularLocation>
        <location>Endoplasmic reticulum</location>
    </subcellularLocation>
</comment>
<comment type="alternative products">
    <event type="alternative splicing"/>
    <isoform>
        <id>Q49MI3-1</id>
        <name>1</name>
        <name>b</name>
        <sequence type="displayed"/>
    </isoform>
    <isoform>
        <id>Q49MI3-2</id>
        <name>2</name>
        <name>a</name>
        <sequence type="described" ref="VSP_016659"/>
    </isoform>
    <isoform>
        <id>Q49MI3-3</id>
        <name>3</name>
        <name>d</name>
        <sequence type="described" ref="VSP_016656"/>
    </isoform>
    <isoform>
        <id>Q49MI3-4</id>
        <name>4</name>
        <name>c</name>
        <sequence type="described" ref="VSP_016653"/>
    </isoform>
    <isoform>
        <id>Q49MI3-5</id>
        <name>5</name>
        <sequence type="described" ref="VSP_016659 VSP_016660"/>
    </isoform>
    <isoform>
        <id>Q49MI3-7</id>
        <name>7</name>
        <name>f</name>
        <sequence type="described" ref="VSP_016657 VSP_016658"/>
    </isoform>
    <isoform>
        <id>Q49MI3-8</id>
        <name>8</name>
        <name>e</name>
        <sequence type="described" ref="VSP_016654 VSP_016655"/>
    </isoform>
    <isoform>
        <id>Q49MI3-9</id>
        <name>9</name>
        <sequence type="described" ref="VSP_042663"/>
    </isoform>
</comment>
<comment type="tissue specificity">
    <text evidence="4 5 7">Isoform 1 and isoform 2 are expressed in adult retina, liver and pancreas as well as in fetal brain, lung and kidney. Isoform 3 is expressed in adult retina as well as in fetal lung and liver. Isoform 4 is expressed in adult retina, lung and kidney as well as in fetal lung and liver. Moderately expressed in retina, kidney, lung, testis, trachea, and pancreas. Weakly expressed in brain, placenta and liver.</text>
</comment>
<comment type="developmental stage">
    <text evidence="4">Expressed in fetal lung, kidney and brain.</text>
</comment>
<comment type="PTM">
    <text evidence="5">Phosphorylated on serine residues.</text>
</comment>
<comment type="disease" evidence="4 6">
    <disease id="DI-00988">
        <name>Retinitis pigmentosa 26</name>
        <acronym>RP26</acronym>
        <description>A retinal dystrophy belonging to the group of pigmentary retinopathies. Retinitis pigmentosa is characterized by retinal pigment deposits visible on fundus examination and primary loss of rod photoreceptor cells followed by secondary loss of cone photoreceptors. Patients typically have night vision blindness and loss of midperipheral visual field. As their condition progresses, they lose their far peripheral visual field and eventually central vision as well.</description>
        <dbReference type="MIM" id="608380"/>
    </disease>
    <text>The disease is caused by variants affecting the gene represented in this entry.</text>
</comment>
<comment type="miscellaneous">
    <molecule>Isoform 5</molecule>
    <text evidence="13">May be produced at very low levels due to a premature stop codon in the mRNA, leading to nonsense-mediated mRNA decay.</text>
</comment>
<comment type="miscellaneous">
    <molecule>Isoform 7</molecule>
    <text evidence="13">May be produced at very low levels due to a premature stop codon in the mRNA, leading to nonsense-mediated mRNA decay.</text>
</comment>
<comment type="miscellaneous">
    <molecule>Isoform 8</molecule>
    <text evidence="13">May be produced at very low levels due to a premature stop codon in the mRNA, leading to nonsense-mediated mRNA decay.</text>
</comment>
<comment type="sequence caution" evidence="13">
    <conflict type="erroneous translation">
        <sequence resource="EMBL-CDS" id="BAC85266"/>
    </conflict>
    <text>Wrong choice of CDS.</text>
</comment>
<comment type="sequence caution" evidence="13">
    <conflict type="frameshift">
        <sequence resource="EMBL-CDS" id="CAG26980"/>
    </conflict>
</comment>
<name>CERKL_HUMAN</name>
<sequence>MPWRRRRNRVSALEGGREEEAPPEAAAVPPALLTSPQQTEAAAERILLRGIFEIGRDSCDVVLSERALRWRPIQPERPAGDSKYDLLCKEEFIELKDIFSVKLKRRCSVKQQRSGTLLGITLFICLKKEQNKLKNSTLDLINLSEDHCDIWFRQFKKILAGFPNRPKSLKILLNPQSHKKEATQVYYEKVEPLLKLAGIKTDVTIMEYEGHALSLLKECELQGFDGGHRKPLFAIHWSVQRLFTGMQTLEPSVVCVGGDGSASEVAHALLLRAQKNAGMETDRILTPVRAQLPLGLIPAGSTNVLAHSLHGVPHVITATLHIIMGHVQLVDVCTFSTAGKLLRFGFSAMFGFGGRTLALAEKYRWMSPNQRRDFAVVKALAKLKAEDCEISFLPFNSSDDVQERRAQGSPKSDCNDQWQMIQGQFLNVSIMAIPCLCSVAPRGLAPNTRLNNGSMALIIARNTSRPEFIKHLKRYASVKNQFNFPFVETYTVEEVKVHPRNNTGGYNPEEEEDETASENCFPWNVDGDLMEVASEVHIRLHPRLISLYGGSMEEMIPK</sequence>
<protein>
    <recommendedName>
        <fullName>Ceramide kinase-like protein</fullName>
    </recommendedName>
</protein>
<evidence type="ECO:0000255" key="1"/>
<evidence type="ECO:0000255" key="2">
    <source>
        <dbReference type="PROSITE-ProRule" id="PRU00783"/>
    </source>
</evidence>
<evidence type="ECO:0000256" key="3">
    <source>
        <dbReference type="SAM" id="MobiDB-lite"/>
    </source>
</evidence>
<evidence type="ECO:0000269" key="4">
    <source>
    </source>
</evidence>
<evidence type="ECO:0000269" key="5">
    <source>
    </source>
</evidence>
<evidence type="ECO:0000269" key="6">
    <source>
    </source>
</evidence>
<evidence type="ECO:0000269" key="7">
    <source>
    </source>
</evidence>
<evidence type="ECO:0000269" key="8">
    <source>
    </source>
</evidence>
<evidence type="ECO:0000303" key="9">
    <source>
    </source>
</evidence>
<evidence type="ECO:0000303" key="10">
    <source>
    </source>
</evidence>
<evidence type="ECO:0000303" key="11">
    <source>
    </source>
</evidence>
<evidence type="ECO:0000303" key="12">
    <source>
    </source>
</evidence>
<evidence type="ECO:0000305" key="13"/>
<dbReference type="EMBL" id="AY357073">
    <property type="protein sequence ID" value="AAR13670.1"/>
    <property type="molecule type" value="mRNA"/>
</dbReference>
<dbReference type="EMBL" id="AY690329">
    <property type="protein sequence ID" value="AAW47988.1"/>
    <property type="molecule type" value="mRNA"/>
</dbReference>
<dbReference type="EMBL" id="AY690330">
    <property type="protein sequence ID" value="AAW47989.1"/>
    <property type="molecule type" value="mRNA"/>
</dbReference>
<dbReference type="EMBL" id="AY690331">
    <property type="protein sequence ID" value="AAW47990.1"/>
    <property type="molecule type" value="mRNA"/>
</dbReference>
<dbReference type="EMBL" id="AY690332">
    <property type="protein sequence ID" value="AAW47991.1"/>
    <property type="molecule type" value="mRNA"/>
</dbReference>
<dbReference type="EMBL" id="AY690333">
    <property type="protein sequence ID" value="AAW47992.1"/>
    <property type="molecule type" value="mRNA"/>
</dbReference>
<dbReference type="EMBL" id="AJ640141">
    <property type="protein sequence ID" value="CAG26695.1"/>
    <property type="molecule type" value="mRNA"/>
</dbReference>
<dbReference type="EMBL" id="AJ697855">
    <property type="protein sequence ID" value="CAG26977.1"/>
    <property type="molecule type" value="mRNA"/>
</dbReference>
<dbReference type="EMBL" id="AJ697856">
    <property type="protein sequence ID" value="CAG26978.1"/>
    <property type="molecule type" value="mRNA"/>
</dbReference>
<dbReference type="EMBL" id="AJ697858">
    <property type="protein sequence ID" value="CAG26980.1"/>
    <property type="status" value="ALT_FRAME"/>
    <property type="molecule type" value="mRNA"/>
</dbReference>
<dbReference type="EMBL" id="AK129976">
    <property type="protein sequence ID" value="BAC85266.1"/>
    <property type="status" value="ALT_SEQ"/>
    <property type="molecule type" value="mRNA"/>
</dbReference>
<dbReference type="EMBL" id="AK293844">
    <property type="protein sequence ID" value="BAG57242.1"/>
    <property type="molecule type" value="mRNA"/>
</dbReference>
<dbReference type="EMBL" id="AC013733">
    <property type="status" value="NOT_ANNOTATED_CDS"/>
    <property type="molecule type" value="Genomic_DNA"/>
</dbReference>
<dbReference type="EMBL" id="AC020595">
    <property type="status" value="NOT_ANNOTATED_CDS"/>
    <property type="molecule type" value="Genomic_DNA"/>
</dbReference>
<dbReference type="EMBL" id="BC137498">
    <property type="protein sequence ID" value="AAI37499.1"/>
    <property type="molecule type" value="mRNA"/>
</dbReference>
<dbReference type="EMBL" id="BC137499">
    <property type="protein sequence ID" value="AAI37500.1"/>
    <property type="molecule type" value="mRNA"/>
</dbReference>
<dbReference type="CCDS" id="CCDS33340.1">
    <molecule id="Q49MI3-4"/>
</dbReference>
<dbReference type="CCDS" id="CCDS33341.1">
    <molecule id="Q49MI3-3"/>
</dbReference>
<dbReference type="CCDS" id="CCDS42789.1">
    <molecule id="Q49MI3-1"/>
</dbReference>
<dbReference type="CCDS" id="CCDS46466.1">
    <molecule id="Q49MI3-2"/>
</dbReference>
<dbReference type="CCDS" id="CCDS54425.1">
    <molecule id="Q49MI3-9"/>
</dbReference>
<dbReference type="RefSeq" id="NP_001025482.1">
    <molecule id="Q49MI3-1"/>
    <property type="nucleotide sequence ID" value="NM_001030311.3"/>
</dbReference>
<dbReference type="RefSeq" id="NP_001025483.1">
    <molecule id="Q49MI3-4"/>
    <property type="nucleotide sequence ID" value="NM_001030312.3"/>
</dbReference>
<dbReference type="RefSeq" id="NP_001025484.1">
    <molecule id="Q49MI3-3"/>
    <property type="nucleotide sequence ID" value="NM_001030313.3"/>
</dbReference>
<dbReference type="RefSeq" id="NP_001153749.1">
    <molecule id="Q49MI3-9"/>
    <property type="nucleotide sequence ID" value="NM_001160277.2"/>
</dbReference>
<dbReference type="RefSeq" id="NP_963842.1">
    <molecule id="Q49MI3-2"/>
    <property type="nucleotide sequence ID" value="NM_201548.5"/>
</dbReference>
<dbReference type="SMR" id="Q49MI3"/>
<dbReference type="BioGRID" id="131968">
    <property type="interactions" value="12"/>
</dbReference>
<dbReference type="FunCoup" id="Q49MI3">
    <property type="interactions" value="851"/>
</dbReference>
<dbReference type="IntAct" id="Q49MI3">
    <property type="interactions" value="12"/>
</dbReference>
<dbReference type="MINT" id="Q49MI3"/>
<dbReference type="STRING" id="9606.ENSP00000341159"/>
<dbReference type="iPTMnet" id="Q49MI3"/>
<dbReference type="PhosphoSitePlus" id="Q49MI3"/>
<dbReference type="BioMuta" id="CERKL"/>
<dbReference type="DMDM" id="84028814"/>
<dbReference type="jPOST" id="Q49MI3"/>
<dbReference type="MassIVE" id="Q49MI3"/>
<dbReference type="PaxDb" id="9606-ENSP00000341159"/>
<dbReference type="PeptideAtlas" id="Q49MI3"/>
<dbReference type="Antibodypedia" id="51609">
    <property type="antibodies" value="156 antibodies from 21 providers"/>
</dbReference>
<dbReference type="DNASU" id="375298"/>
<dbReference type="Ensembl" id="ENST00000339098.9">
    <molecule id="Q49MI3-1"/>
    <property type="protein sequence ID" value="ENSP00000341159.5"/>
    <property type="gene ID" value="ENSG00000188452.15"/>
</dbReference>
<dbReference type="Ensembl" id="ENST00000374967.6">
    <molecule id="Q49MI3-7"/>
    <property type="protein sequence ID" value="ENSP00000364106.2"/>
    <property type="gene ID" value="ENSG00000188452.15"/>
</dbReference>
<dbReference type="Ensembl" id="ENST00000374969.6">
    <molecule id="Q49MI3-4"/>
    <property type="protein sequence ID" value="ENSP00000364108.2"/>
    <property type="gene ID" value="ENSG00000188452.15"/>
</dbReference>
<dbReference type="Ensembl" id="ENST00000374970.6">
    <molecule id="Q49MI3-3"/>
    <property type="protein sequence ID" value="ENSP00000364109.2"/>
    <property type="gene ID" value="ENSG00000188452.15"/>
</dbReference>
<dbReference type="Ensembl" id="ENST00000409440.7">
    <molecule id="Q49MI3-9"/>
    <property type="protein sequence ID" value="ENSP00000387080.3"/>
    <property type="gene ID" value="ENSG00000188452.15"/>
</dbReference>
<dbReference type="Ensembl" id="ENST00000410087.8">
    <molecule id="Q49MI3-2"/>
    <property type="protein sequence ID" value="ENSP00000386725.3"/>
    <property type="gene ID" value="ENSG00000188452.15"/>
</dbReference>
<dbReference type="Ensembl" id="ENST00000421817.5">
    <molecule id="Q49MI3-8"/>
    <property type="protein sequence ID" value="ENSP00000411466.1"/>
    <property type="gene ID" value="ENSG00000188452.15"/>
</dbReference>
<dbReference type="Ensembl" id="ENST00000452174.5">
    <molecule id="Q49MI3-8"/>
    <property type="protein sequence ID" value="ENSP00000409198.1"/>
    <property type="gene ID" value="ENSG00000188452.15"/>
</dbReference>
<dbReference type="GeneID" id="375298"/>
<dbReference type="KEGG" id="hsa:375298"/>
<dbReference type="MANE-Select" id="ENST00000410087.8">
    <molecule id="Q49MI3-2"/>
    <property type="protein sequence ID" value="ENSP00000386725.3"/>
    <property type="RefSeq nucleotide sequence ID" value="NM_201548.5"/>
    <property type="RefSeq protein sequence ID" value="NP_963842.1"/>
</dbReference>
<dbReference type="UCSC" id="uc002unx.4">
    <molecule id="Q49MI3-1"/>
    <property type="organism name" value="human"/>
</dbReference>
<dbReference type="AGR" id="HGNC:21699"/>
<dbReference type="CTD" id="375298"/>
<dbReference type="DisGeNET" id="375298"/>
<dbReference type="GeneCards" id="CERKL"/>
<dbReference type="GeneReviews" id="CERKL"/>
<dbReference type="HGNC" id="HGNC:21699">
    <property type="gene designation" value="CERKL"/>
</dbReference>
<dbReference type="HPA" id="ENSG00000188452">
    <property type="expression patterns" value="Tissue enhanced (lymphoid tissue, retina)"/>
</dbReference>
<dbReference type="MalaCards" id="CERKL"/>
<dbReference type="MIM" id="608380">
    <property type="type" value="phenotype"/>
</dbReference>
<dbReference type="MIM" id="608381">
    <property type="type" value="gene"/>
</dbReference>
<dbReference type="neXtProt" id="NX_Q49MI3"/>
<dbReference type="OpenTargets" id="ENSG00000188452"/>
<dbReference type="Orphanet" id="791">
    <property type="disease" value="Retinitis pigmentosa"/>
</dbReference>
<dbReference type="PharmGKB" id="PA134984780"/>
<dbReference type="VEuPathDB" id="HostDB:ENSG00000188452"/>
<dbReference type="eggNOG" id="KOG1115">
    <property type="taxonomic scope" value="Eukaryota"/>
</dbReference>
<dbReference type="eggNOG" id="KOG1116">
    <property type="taxonomic scope" value="Eukaryota"/>
</dbReference>
<dbReference type="GeneTree" id="ENSGT00940000157578"/>
<dbReference type="HOGENOM" id="CLU_013399_2_0_1"/>
<dbReference type="InParanoid" id="Q49MI3"/>
<dbReference type="OMA" id="CYLWYRS"/>
<dbReference type="OrthoDB" id="3853857at2759"/>
<dbReference type="PAN-GO" id="Q49MI3">
    <property type="GO annotations" value="3 GO annotations based on evolutionary models"/>
</dbReference>
<dbReference type="PhylomeDB" id="Q49MI3"/>
<dbReference type="TreeFam" id="TF314514"/>
<dbReference type="PathwayCommons" id="Q49MI3"/>
<dbReference type="SignaLink" id="Q49MI3"/>
<dbReference type="BioGRID-ORCS" id="375298">
    <property type="hits" value="8 hits in 1155 CRISPR screens"/>
</dbReference>
<dbReference type="CD-CODE" id="DEE660B4">
    <property type="entry name" value="Stress granule"/>
</dbReference>
<dbReference type="ChiTaRS" id="CERKL">
    <property type="organism name" value="human"/>
</dbReference>
<dbReference type="GenomeRNAi" id="375298"/>
<dbReference type="Pharos" id="Q49MI3">
    <property type="development level" value="Tbio"/>
</dbReference>
<dbReference type="PRO" id="PR:Q49MI3"/>
<dbReference type="Proteomes" id="UP000005640">
    <property type="component" value="Chromosome 2"/>
</dbReference>
<dbReference type="RNAct" id="Q49MI3">
    <property type="molecule type" value="protein"/>
</dbReference>
<dbReference type="Bgee" id="ENSG00000188452">
    <property type="expression patterns" value="Expressed in islet of Langerhans and 95 other cell types or tissues"/>
</dbReference>
<dbReference type="ExpressionAtlas" id="Q49MI3">
    <property type="expression patterns" value="baseline and differential"/>
</dbReference>
<dbReference type="GO" id="GO:0005737">
    <property type="term" value="C:cytoplasm"/>
    <property type="evidence" value="ECO:0000314"/>
    <property type="project" value="UniProtKB"/>
</dbReference>
<dbReference type="GO" id="GO:0005829">
    <property type="term" value="C:cytosol"/>
    <property type="evidence" value="ECO:0000314"/>
    <property type="project" value="HPA"/>
</dbReference>
<dbReference type="GO" id="GO:0005783">
    <property type="term" value="C:endoplasmic reticulum"/>
    <property type="evidence" value="ECO:0000314"/>
    <property type="project" value="UniProtKB"/>
</dbReference>
<dbReference type="GO" id="GO:0005794">
    <property type="term" value="C:Golgi apparatus"/>
    <property type="evidence" value="ECO:0000314"/>
    <property type="project" value="UniProtKB"/>
</dbReference>
<dbReference type="GO" id="GO:0016020">
    <property type="term" value="C:membrane"/>
    <property type="evidence" value="ECO:0007669"/>
    <property type="project" value="GOC"/>
</dbReference>
<dbReference type="GO" id="GO:0005730">
    <property type="term" value="C:nucleolus"/>
    <property type="evidence" value="ECO:0000314"/>
    <property type="project" value="UniProtKB"/>
</dbReference>
<dbReference type="GO" id="GO:0005654">
    <property type="term" value="C:nucleoplasm"/>
    <property type="evidence" value="ECO:0000314"/>
    <property type="project" value="HPA"/>
</dbReference>
<dbReference type="GO" id="GO:0048471">
    <property type="term" value="C:perinuclear region of cytoplasm"/>
    <property type="evidence" value="ECO:0007669"/>
    <property type="project" value="Ensembl"/>
</dbReference>
<dbReference type="GO" id="GO:0001917">
    <property type="term" value="C:photoreceptor inner segment"/>
    <property type="evidence" value="ECO:0007669"/>
    <property type="project" value="Ensembl"/>
</dbReference>
<dbReference type="GO" id="GO:0001750">
    <property type="term" value="C:photoreceptor outer segment"/>
    <property type="evidence" value="ECO:0007669"/>
    <property type="project" value="Ensembl"/>
</dbReference>
<dbReference type="GO" id="GO:0001727">
    <property type="term" value="F:lipid kinase activity"/>
    <property type="evidence" value="ECO:0000318"/>
    <property type="project" value="GO_Central"/>
</dbReference>
<dbReference type="GO" id="GO:0046625">
    <property type="term" value="F:sphingolipid binding"/>
    <property type="evidence" value="ECO:0007669"/>
    <property type="project" value="Ensembl"/>
</dbReference>
<dbReference type="GO" id="GO:0043066">
    <property type="term" value="P:negative regulation of apoptotic process"/>
    <property type="evidence" value="ECO:0000314"/>
    <property type="project" value="UniProtKB"/>
</dbReference>
<dbReference type="GO" id="GO:0030148">
    <property type="term" value="P:sphingolipid biosynthetic process"/>
    <property type="evidence" value="ECO:0007669"/>
    <property type="project" value="Ensembl"/>
</dbReference>
<dbReference type="FunFam" id="2.60.200.40:FF:000016">
    <property type="entry name" value="Ceramide kinase like"/>
    <property type="match status" value="1"/>
</dbReference>
<dbReference type="FunFam" id="3.40.50.10330:FF:000043">
    <property type="entry name" value="Ceramide kinase-like protein"/>
    <property type="match status" value="1"/>
</dbReference>
<dbReference type="Gene3D" id="2.60.200.40">
    <property type="match status" value="1"/>
</dbReference>
<dbReference type="Gene3D" id="3.40.50.10330">
    <property type="entry name" value="Probable inorganic polyphosphate/atp-NAD kinase, domain 1"/>
    <property type="match status" value="1"/>
</dbReference>
<dbReference type="InterPro" id="IPR017438">
    <property type="entry name" value="ATP-NAD_kinase_N"/>
</dbReference>
<dbReference type="InterPro" id="IPR045363">
    <property type="entry name" value="CERK_C"/>
</dbReference>
<dbReference type="InterPro" id="IPR001206">
    <property type="entry name" value="Diacylglycerol_kinase_cat_dom"/>
</dbReference>
<dbReference type="InterPro" id="IPR050187">
    <property type="entry name" value="Lipid_Phosphate_FormReg"/>
</dbReference>
<dbReference type="InterPro" id="IPR016064">
    <property type="entry name" value="NAD/diacylglycerol_kinase_sf"/>
</dbReference>
<dbReference type="PANTHER" id="PTHR12358:SF26">
    <property type="entry name" value="CERAMIDE KINASE-LIKE PROTEIN"/>
    <property type="match status" value="1"/>
</dbReference>
<dbReference type="PANTHER" id="PTHR12358">
    <property type="entry name" value="SPHINGOSINE KINASE"/>
    <property type="match status" value="1"/>
</dbReference>
<dbReference type="Pfam" id="PF19280">
    <property type="entry name" value="CERK_C"/>
    <property type="match status" value="1"/>
</dbReference>
<dbReference type="Pfam" id="PF00781">
    <property type="entry name" value="DAGK_cat"/>
    <property type="match status" value="2"/>
</dbReference>
<dbReference type="SUPFAM" id="SSF111331">
    <property type="entry name" value="NAD kinase/diacylglycerol kinase-like"/>
    <property type="match status" value="1"/>
</dbReference>
<dbReference type="PROSITE" id="PS50146">
    <property type="entry name" value="DAGK"/>
    <property type="match status" value="1"/>
</dbReference>
<organism>
    <name type="scientific">Homo sapiens</name>
    <name type="common">Human</name>
    <dbReference type="NCBI Taxonomy" id="9606"/>
    <lineage>
        <taxon>Eukaryota</taxon>
        <taxon>Metazoa</taxon>
        <taxon>Chordata</taxon>
        <taxon>Craniata</taxon>
        <taxon>Vertebrata</taxon>
        <taxon>Euteleostomi</taxon>
        <taxon>Mammalia</taxon>
        <taxon>Eutheria</taxon>
        <taxon>Euarchontoglires</taxon>
        <taxon>Primates</taxon>
        <taxon>Haplorrhini</taxon>
        <taxon>Catarrhini</taxon>
        <taxon>Hominidae</taxon>
        <taxon>Homo</taxon>
    </lineage>
</organism>